<proteinExistence type="evidence at transcript level"/>
<dbReference type="EC" id="1.16.3.1"/>
<dbReference type="EMBL" id="AJ312192">
    <property type="protein sequence ID" value="CAC85498.1"/>
    <property type="molecule type" value="mRNA"/>
</dbReference>
<dbReference type="EMBL" id="AC009991">
    <property type="protein sequence ID" value="AAF01516.1"/>
    <property type="molecule type" value="Genomic_DNA"/>
</dbReference>
<dbReference type="EMBL" id="AC073395">
    <property type="protein sequence ID" value="AAG50984.1"/>
    <property type="molecule type" value="Genomic_DNA"/>
</dbReference>
<dbReference type="EMBL" id="CP002686">
    <property type="protein sequence ID" value="AEE74997.1"/>
    <property type="molecule type" value="Genomic_DNA"/>
</dbReference>
<dbReference type="EMBL" id="AK175807">
    <property type="protein sequence ID" value="BAD43570.1"/>
    <property type="molecule type" value="mRNA"/>
</dbReference>
<dbReference type="EMBL" id="AK175899">
    <property type="protein sequence ID" value="BAD43662.1"/>
    <property type="molecule type" value="mRNA"/>
</dbReference>
<dbReference type="EMBL" id="AK175901">
    <property type="protein sequence ID" value="BAD43664.1"/>
    <property type="molecule type" value="mRNA"/>
</dbReference>
<dbReference type="EMBL" id="AK175910">
    <property type="protein sequence ID" value="BAD43673.1"/>
    <property type="molecule type" value="mRNA"/>
</dbReference>
<dbReference type="EMBL" id="AY088333">
    <property type="protein sequence ID" value="AAM65872.1"/>
    <property type="molecule type" value="mRNA"/>
</dbReference>
<dbReference type="EMBL" id="Z34949">
    <property type="protein sequence ID" value="CAA84408.1"/>
    <property type="molecule type" value="mRNA"/>
</dbReference>
<dbReference type="RefSeq" id="NP_187716.1">
    <property type="nucleotide sequence ID" value="NM_111942.4"/>
</dbReference>
<dbReference type="SMR" id="Q9SRL5"/>
<dbReference type="BioGRID" id="5610">
    <property type="interactions" value="1"/>
</dbReference>
<dbReference type="FunCoup" id="Q9SRL5">
    <property type="interactions" value="152"/>
</dbReference>
<dbReference type="STRING" id="3702.Q9SRL5"/>
<dbReference type="PaxDb" id="3702-AT3G11050.1"/>
<dbReference type="ProteomicsDB" id="230610"/>
<dbReference type="EnsemblPlants" id="AT3G11050.1">
    <property type="protein sequence ID" value="AT3G11050.1"/>
    <property type="gene ID" value="AT3G11050"/>
</dbReference>
<dbReference type="GeneID" id="820276"/>
<dbReference type="Gramene" id="AT3G11050.1">
    <property type="protein sequence ID" value="AT3G11050.1"/>
    <property type="gene ID" value="AT3G11050"/>
</dbReference>
<dbReference type="KEGG" id="ath:AT3G11050"/>
<dbReference type="Araport" id="AT3G11050"/>
<dbReference type="TAIR" id="AT3G11050">
    <property type="gene designation" value="FER2"/>
</dbReference>
<dbReference type="eggNOG" id="KOG2332">
    <property type="taxonomic scope" value="Eukaryota"/>
</dbReference>
<dbReference type="HOGENOM" id="CLU_065681_0_0_1"/>
<dbReference type="InParanoid" id="Q9SRL5"/>
<dbReference type="OMA" id="GAHEYFK"/>
<dbReference type="PhylomeDB" id="Q9SRL5"/>
<dbReference type="BioCyc" id="ARA:AT3G11050-MONOMER"/>
<dbReference type="PRO" id="PR:Q9SRL5"/>
<dbReference type="Proteomes" id="UP000006548">
    <property type="component" value="Chromosome 3"/>
</dbReference>
<dbReference type="ExpressionAtlas" id="Q9SRL5">
    <property type="expression patterns" value="baseline and differential"/>
</dbReference>
<dbReference type="GO" id="GO:0009507">
    <property type="term" value="C:chloroplast"/>
    <property type="evidence" value="ECO:0000250"/>
    <property type="project" value="TAIR"/>
</dbReference>
<dbReference type="GO" id="GO:0008199">
    <property type="term" value="F:ferric iron binding"/>
    <property type="evidence" value="ECO:0007669"/>
    <property type="project" value="InterPro"/>
</dbReference>
<dbReference type="GO" id="GO:0004322">
    <property type="term" value="F:ferroxidase activity"/>
    <property type="evidence" value="ECO:0007669"/>
    <property type="project" value="UniProtKB-EC"/>
</dbReference>
<dbReference type="GO" id="GO:0006879">
    <property type="term" value="P:intracellular iron ion homeostasis"/>
    <property type="evidence" value="ECO:0007669"/>
    <property type="project" value="UniProtKB-KW"/>
</dbReference>
<dbReference type="GO" id="GO:0006826">
    <property type="term" value="P:iron ion transport"/>
    <property type="evidence" value="ECO:0007669"/>
    <property type="project" value="InterPro"/>
</dbReference>
<dbReference type="GO" id="GO:0009737">
    <property type="term" value="P:response to abscisic acid"/>
    <property type="evidence" value="ECO:0000270"/>
    <property type="project" value="TAIR"/>
</dbReference>
<dbReference type="GO" id="GO:0006979">
    <property type="term" value="P:response to oxidative stress"/>
    <property type="evidence" value="ECO:0000315"/>
    <property type="project" value="TAIR"/>
</dbReference>
<dbReference type="CDD" id="cd01056">
    <property type="entry name" value="Euk_Ferritin"/>
    <property type="match status" value="1"/>
</dbReference>
<dbReference type="FunFam" id="1.20.1260.10:FF:000006">
    <property type="entry name" value="Ferritin"/>
    <property type="match status" value="1"/>
</dbReference>
<dbReference type="Gene3D" id="1.20.1260.10">
    <property type="match status" value="1"/>
</dbReference>
<dbReference type="InterPro" id="IPR001519">
    <property type="entry name" value="Ferritin"/>
</dbReference>
<dbReference type="InterPro" id="IPR012347">
    <property type="entry name" value="Ferritin-like"/>
</dbReference>
<dbReference type="InterPro" id="IPR009040">
    <property type="entry name" value="Ferritin-like_diiron"/>
</dbReference>
<dbReference type="InterPro" id="IPR009078">
    <property type="entry name" value="Ferritin-like_SF"/>
</dbReference>
<dbReference type="InterPro" id="IPR014034">
    <property type="entry name" value="Ferritin_CS"/>
</dbReference>
<dbReference type="InterPro" id="IPR008331">
    <property type="entry name" value="Ferritin_DPS_dom"/>
</dbReference>
<dbReference type="PANTHER" id="PTHR11431">
    <property type="entry name" value="FERRITIN"/>
    <property type="match status" value="1"/>
</dbReference>
<dbReference type="PANTHER" id="PTHR11431:SF126">
    <property type="entry name" value="FERRITIN-2, CHLOROPLASTIC-RELATED"/>
    <property type="match status" value="1"/>
</dbReference>
<dbReference type="Pfam" id="PF00210">
    <property type="entry name" value="Ferritin"/>
    <property type="match status" value="1"/>
</dbReference>
<dbReference type="SUPFAM" id="SSF47240">
    <property type="entry name" value="Ferritin-like"/>
    <property type="match status" value="1"/>
</dbReference>
<dbReference type="PROSITE" id="PS00204">
    <property type="entry name" value="FERRITIN_2"/>
    <property type="match status" value="1"/>
</dbReference>
<dbReference type="PROSITE" id="PS50905">
    <property type="entry name" value="FERRITIN_LIKE"/>
    <property type="match status" value="1"/>
</dbReference>
<gene>
    <name type="primary">FER2</name>
    <name type="ordered locus">At3g11050</name>
    <name type="ORF">F11B9.26</name>
    <name type="ORF">F9F8.13</name>
</gene>
<keyword id="KW-0150">Chloroplast</keyword>
<keyword id="KW-0408">Iron</keyword>
<keyword id="KW-0409">Iron storage</keyword>
<keyword id="KW-0479">Metal-binding</keyword>
<keyword id="KW-0560">Oxidoreductase</keyword>
<keyword id="KW-0934">Plastid</keyword>
<keyword id="KW-1185">Reference proteome</keyword>
<keyword id="KW-0809">Transit peptide</keyword>
<reference key="1">
    <citation type="journal article" date="2001" name="Biochem. J.">
        <title>Structure and differential expression of the four members of the Arabidopsis thaliana ferritin gene family.</title>
        <authorList>
            <person name="Petit J.-M."/>
            <person name="Briat J.-F."/>
            <person name="Lobreaux S."/>
        </authorList>
    </citation>
    <scope>NUCLEOTIDE SEQUENCE [MRNA]</scope>
    <scope>INDUCTION</scope>
    <source>
        <strain>cv. Columbia</strain>
    </source>
</reference>
<reference key="2">
    <citation type="journal article" date="2000" name="Nature">
        <title>Sequence and analysis of chromosome 3 of the plant Arabidopsis thaliana.</title>
        <authorList>
            <person name="Salanoubat M."/>
            <person name="Lemcke K."/>
            <person name="Rieger M."/>
            <person name="Ansorge W."/>
            <person name="Unseld M."/>
            <person name="Fartmann B."/>
            <person name="Valle G."/>
            <person name="Bloecker H."/>
            <person name="Perez-Alonso M."/>
            <person name="Obermaier B."/>
            <person name="Delseny M."/>
            <person name="Boutry M."/>
            <person name="Grivell L.A."/>
            <person name="Mache R."/>
            <person name="Puigdomenech P."/>
            <person name="De Simone V."/>
            <person name="Choisne N."/>
            <person name="Artiguenave F."/>
            <person name="Robert C."/>
            <person name="Brottier P."/>
            <person name="Wincker P."/>
            <person name="Cattolico L."/>
            <person name="Weissenbach J."/>
            <person name="Saurin W."/>
            <person name="Quetier F."/>
            <person name="Schaefer M."/>
            <person name="Mueller-Auer S."/>
            <person name="Gabel C."/>
            <person name="Fuchs M."/>
            <person name="Benes V."/>
            <person name="Wurmbach E."/>
            <person name="Drzonek H."/>
            <person name="Erfle H."/>
            <person name="Jordan N."/>
            <person name="Bangert S."/>
            <person name="Wiedelmann R."/>
            <person name="Kranz H."/>
            <person name="Voss H."/>
            <person name="Holland R."/>
            <person name="Brandt P."/>
            <person name="Nyakatura G."/>
            <person name="Vezzi A."/>
            <person name="D'Angelo M."/>
            <person name="Pallavicini A."/>
            <person name="Toppo S."/>
            <person name="Simionati B."/>
            <person name="Conrad A."/>
            <person name="Hornischer K."/>
            <person name="Kauer G."/>
            <person name="Loehnert T.-H."/>
            <person name="Nordsiek G."/>
            <person name="Reichelt J."/>
            <person name="Scharfe M."/>
            <person name="Schoen O."/>
            <person name="Bargues M."/>
            <person name="Terol J."/>
            <person name="Climent J."/>
            <person name="Navarro P."/>
            <person name="Collado C."/>
            <person name="Perez-Perez A."/>
            <person name="Ottenwaelder B."/>
            <person name="Duchemin D."/>
            <person name="Cooke R."/>
            <person name="Laudie M."/>
            <person name="Berger-Llauro C."/>
            <person name="Purnelle B."/>
            <person name="Masuy D."/>
            <person name="de Haan M."/>
            <person name="Maarse A.C."/>
            <person name="Alcaraz J.-P."/>
            <person name="Cottet A."/>
            <person name="Casacuberta E."/>
            <person name="Monfort A."/>
            <person name="Argiriou A."/>
            <person name="Flores M."/>
            <person name="Liguori R."/>
            <person name="Vitale D."/>
            <person name="Mannhaupt G."/>
            <person name="Haase D."/>
            <person name="Schoof H."/>
            <person name="Rudd S."/>
            <person name="Zaccaria P."/>
            <person name="Mewes H.-W."/>
            <person name="Mayer K.F.X."/>
            <person name="Kaul S."/>
            <person name="Town C.D."/>
            <person name="Koo H.L."/>
            <person name="Tallon L.J."/>
            <person name="Jenkins J."/>
            <person name="Rooney T."/>
            <person name="Rizzo M."/>
            <person name="Walts A."/>
            <person name="Utterback T."/>
            <person name="Fujii C.Y."/>
            <person name="Shea T.P."/>
            <person name="Creasy T.H."/>
            <person name="Haas B."/>
            <person name="Maiti R."/>
            <person name="Wu D."/>
            <person name="Peterson J."/>
            <person name="Van Aken S."/>
            <person name="Pai G."/>
            <person name="Militscher J."/>
            <person name="Sellers P."/>
            <person name="Gill J.E."/>
            <person name="Feldblyum T.V."/>
            <person name="Preuss D."/>
            <person name="Lin X."/>
            <person name="Nierman W.C."/>
            <person name="Salzberg S.L."/>
            <person name="White O."/>
            <person name="Venter J.C."/>
            <person name="Fraser C.M."/>
            <person name="Kaneko T."/>
            <person name="Nakamura Y."/>
            <person name="Sato S."/>
            <person name="Kato T."/>
            <person name="Asamizu E."/>
            <person name="Sasamoto S."/>
            <person name="Kimura T."/>
            <person name="Idesawa K."/>
            <person name="Kawashima K."/>
            <person name="Kishida Y."/>
            <person name="Kiyokawa C."/>
            <person name="Kohara M."/>
            <person name="Matsumoto M."/>
            <person name="Matsuno A."/>
            <person name="Muraki A."/>
            <person name="Nakayama S."/>
            <person name="Nakazaki N."/>
            <person name="Shinpo S."/>
            <person name="Takeuchi C."/>
            <person name="Wada T."/>
            <person name="Watanabe A."/>
            <person name="Yamada M."/>
            <person name="Yasuda M."/>
            <person name="Tabata S."/>
        </authorList>
    </citation>
    <scope>NUCLEOTIDE SEQUENCE [LARGE SCALE GENOMIC DNA]</scope>
    <source>
        <strain>cv. Columbia</strain>
    </source>
</reference>
<reference key="3">
    <citation type="journal article" date="2017" name="Plant J.">
        <title>Araport11: a complete reannotation of the Arabidopsis thaliana reference genome.</title>
        <authorList>
            <person name="Cheng C.Y."/>
            <person name="Krishnakumar V."/>
            <person name="Chan A.P."/>
            <person name="Thibaud-Nissen F."/>
            <person name="Schobel S."/>
            <person name="Town C.D."/>
        </authorList>
    </citation>
    <scope>GENOME REANNOTATION</scope>
    <source>
        <strain>cv. Columbia</strain>
    </source>
</reference>
<reference key="4">
    <citation type="submission" date="2004-09" db="EMBL/GenBank/DDBJ databases">
        <title>Large-scale analysis of RIKEN Arabidopsis full-length (RAFL) cDNAs.</title>
        <authorList>
            <person name="Totoki Y."/>
            <person name="Seki M."/>
            <person name="Ishida J."/>
            <person name="Nakajima M."/>
            <person name="Enju A."/>
            <person name="Kamiya A."/>
            <person name="Narusaka M."/>
            <person name="Shin-i T."/>
            <person name="Nakagawa M."/>
            <person name="Sakamoto N."/>
            <person name="Oishi K."/>
            <person name="Kohara Y."/>
            <person name="Kobayashi M."/>
            <person name="Toyoda A."/>
            <person name="Sakaki Y."/>
            <person name="Sakurai T."/>
            <person name="Iida K."/>
            <person name="Akiyama K."/>
            <person name="Satou M."/>
            <person name="Toyoda T."/>
            <person name="Konagaya A."/>
            <person name="Carninci P."/>
            <person name="Kawai J."/>
            <person name="Hayashizaki Y."/>
            <person name="Shinozaki K."/>
        </authorList>
    </citation>
    <scope>NUCLEOTIDE SEQUENCE [LARGE SCALE MRNA]</scope>
    <source>
        <strain>cv. Columbia</strain>
    </source>
</reference>
<reference key="5">
    <citation type="submission" date="2002-03" db="EMBL/GenBank/DDBJ databases">
        <title>Full-length cDNA from Arabidopsis thaliana.</title>
        <authorList>
            <person name="Brover V.V."/>
            <person name="Troukhan M.E."/>
            <person name="Alexandrov N.A."/>
            <person name="Lu Y.-P."/>
            <person name="Flavell R.B."/>
            <person name="Feldmann K.A."/>
        </authorList>
    </citation>
    <scope>NUCLEOTIDE SEQUENCE [LARGE SCALE MRNA]</scope>
</reference>
<reference key="6">
    <citation type="journal article" date="1996" name="Plant J.">
        <title>Further progress towards a catalogue of all Arabidopsis genes: analysis of a set of 5000 non-redundant ESTs.</title>
        <authorList>
            <person name="Cooke R."/>
            <person name="Raynal M."/>
            <person name="Laudie M."/>
            <person name="Grellet F."/>
            <person name="Delseny M."/>
            <person name="Morris P.-C."/>
            <person name="Guerrier D."/>
            <person name="Giraudat J."/>
            <person name="Quigley F."/>
            <person name="Clabault G."/>
            <person name="Li Y.-F."/>
            <person name="Mache R."/>
            <person name="Krivitzky M."/>
            <person name="Gy I.J.-J."/>
            <person name="Kreis M."/>
            <person name="Lecharny A."/>
            <person name="Parmentier Y."/>
            <person name="Marbach J."/>
            <person name="Fleck J."/>
            <person name="Clement B."/>
            <person name="Philipps G."/>
            <person name="Herve C."/>
            <person name="Bardet C."/>
            <person name="Tremousaygue D."/>
            <person name="Lescure B."/>
            <person name="Lacomme C."/>
            <person name="Roby D."/>
            <person name="Jourjon M.-F."/>
            <person name="Chabrier P."/>
            <person name="Charpenteau J.-L."/>
            <person name="Desprez T."/>
            <person name="Amselem J."/>
            <person name="Chiapello H."/>
            <person name="Hoefte H."/>
        </authorList>
    </citation>
    <scope>NUCLEOTIDE SEQUENCE [LARGE SCALE MRNA] OF 111-212</scope>
    <source>
        <strain>cv. Columbia</strain>
        <tissue>Leaf</tissue>
    </source>
</reference>
<sequence>MLHKASPALSLLSSGYTGGGNLFPPSRNSSNLLFSPSGSRFSVQAAKGTNTKSLTGVVFEPFEEVKKEMELVPTTPFVSLARHKFSDDSESAINDQINVEYNVSYVYHALYAYFDRDNVGLKGFAKFFNDSSLEERGHAEMFMEYQNKRGGRVKLQSILMPVSEFDHEEKGDALHAMELALSLEKLTNEKLLKLQSVGVKNNDVQLVDFVESEFLGEQVEAIKKISEYVAQLRRIGKGHGVWHFDQMLLNDEV</sequence>
<protein>
    <recommendedName>
        <fullName>Ferritin-2, chloroplastic</fullName>
        <ecNumber>1.16.3.1</ecNumber>
    </recommendedName>
</protein>
<comment type="function">
    <text evidence="1">Stores iron in a soluble, non-toxic, readily available form. Important for iron homeostasis. Has ferroxidase activity. Iron is taken up in the ferrous form and deposited as ferric hydroxides after oxidation (By similarity).</text>
</comment>
<comment type="catalytic activity">
    <reaction>
        <text>4 Fe(2+) + O2 + 4 H(+) = 4 Fe(3+) + 2 H2O</text>
        <dbReference type="Rhea" id="RHEA:11148"/>
        <dbReference type="ChEBI" id="CHEBI:15377"/>
        <dbReference type="ChEBI" id="CHEBI:15378"/>
        <dbReference type="ChEBI" id="CHEBI:15379"/>
        <dbReference type="ChEBI" id="CHEBI:29033"/>
        <dbReference type="ChEBI" id="CHEBI:29034"/>
        <dbReference type="EC" id="1.16.3.1"/>
    </reaction>
</comment>
<comment type="subunit">
    <text evidence="1">Oligomer of 24 subunits. There are two types of subunits: L (light) chain and H (heavy) chain. The major chain can be light or heavy, depending on the species and tissue type. The functional molecule forms a roughly spherical shell with a diameter of 12 nm and contains a central cavity into which the insoluble mineral iron core is deposited (By similarity).</text>
</comment>
<comment type="subcellular location">
    <subcellularLocation>
        <location evidence="1">Plastid</location>
        <location evidence="1">Chloroplast</location>
    </subcellularLocation>
</comment>
<comment type="induction">
    <text evidence="4">By abscisic acid (ABA).</text>
</comment>
<comment type="similarity">
    <text evidence="5">Belongs to the ferritin family.</text>
</comment>
<accession>Q9SRL5</accession>
<accession>Q42288</accession>
<accession>Q8L9N6</accession>
<accession>Q8WHW4</accession>
<organism>
    <name type="scientific">Arabidopsis thaliana</name>
    <name type="common">Mouse-ear cress</name>
    <dbReference type="NCBI Taxonomy" id="3702"/>
    <lineage>
        <taxon>Eukaryota</taxon>
        <taxon>Viridiplantae</taxon>
        <taxon>Streptophyta</taxon>
        <taxon>Embryophyta</taxon>
        <taxon>Tracheophyta</taxon>
        <taxon>Spermatophyta</taxon>
        <taxon>Magnoliopsida</taxon>
        <taxon>eudicotyledons</taxon>
        <taxon>Gunneridae</taxon>
        <taxon>Pentapetalae</taxon>
        <taxon>rosids</taxon>
        <taxon>malvids</taxon>
        <taxon>Brassicales</taxon>
        <taxon>Brassicaceae</taxon>
        <taxon>Camelineae</taxon>
        <taxon>Arabidopsis</taxon>
    </lineage>
</organism>
<evidence type="ECO:0000250" key="1"/>
<evidence type="ECO:0000255" key="2"/>
<evidence type="ECO:0000255" key="3">
    <source>
        <dbReference type="PROSITE-ProRule" id="PRU00085"/>
    </source>
</evidence>
<evidence type="ECO:0000269" key="4">
    <source>
    </source>
</evidence>
<evidence type="ECO:0000305" key="5"/>
<name>FRI2_ARATH</name>
<feature type="transit peptide" description="Chloroplast" evidence="2">
    <location>
        <begin position="1"/>
        <end position="45"/>
    </location>
</feature>
<feature type="chain" id="PRO_0000008855" description="Ferritin-2, chloroplastic">
    <location>
        <begin position="46"/>
        <end position="253"/>
    </location>
</feature>
<feature type="domain" description="Ferritin-like diiron" evidence="3">
    <location>
        <begin position="83"/>
        <end position="236"/>
    </location>
</feature>
<feature type="region of interest" description="Extension peptide (EP)">
    <location>
        <begin position="46"/>
        <end position="82"/>
    </location>
</feature>
<feature type="binding site" evidence="3">
    <location>
        <position position="100"/>
    </location>
    <ligand>
        <name>Fe cation</name>
        <dbReference type="ChEBI" id="CHEBI:24875"/>
        <label>1</label>
    </ligand>
</feature>
<feature type="binding site" evidence="3">
    <location>
        <position position="135"/>
    </location>
    <ligand>
        <name>Fe cation</name>
        <dbReference type="ChEBI" id="CHEBI:24875"/>
        <label>1</label>
    </ligand>
</feature>
<feature type="binding site" evidence="3">
    <location>
        <position position="135"/>
    </location>
    <ligand>
        <name>Fe cation</name>
        <dbReference type="ChEBI" id="CHEBI:24875"/>
        <label>2</label>
    </ligand>
</feature>
<feature type="binding site" evidence="3">
    <location>
        <position position="138"/>
    </location>
    <ligand>
        <name>Fe cation</name>
        <dbReference type="ChEBI" id="CHEBI:24875"/>
        <label>1</label>
    </ligand>
</feature>
<feature type="binding site" evidence="3">
    <location>
        <position position="184"/>
    </location>
    <ligand>
        <name>Fe cation</name>
        <dbReference type="ChEBI" id="CHEBI:24875"/>
        <label>2</label>
    </ligand>
</feature>
<feature type="binding site" evidence="3">
    <location>
        <position position="218"/>
    </location>
    <ligand>
        <name>Fe cation</name>
        <dbReference type="ChEBI" id="CHEBI:24875"/>
        <label>2</label>
    </ligand>
</feature>
<feature type="sequence conflict" description="In Ref. 5; AAM65872." evidence="5" ref="5">
    <original>H</original>
    <variation>L</variation>
    <location>
        <position position="3"/>
    </location>
</feature>
<feature type="sequence conflict" description="In Ref. 5; AAM65872." evidence="5" ref="5">
    <original>Y</original>
    <variation>S</variation>
    <location>
        <position position="16"/>
    </location>
</feature>
<feature type="sequence conflict" description="In Ref. 5; AAM65872." evidence="5" ref="5">
    <original>L</original>
    <variation>R</variation>
    <location>
        <position position="32"/>
    </location>
</feature>
<feature type="sequence conflict" description="In Ref. 5; AAM65872." evidence="5" ref="5">
    <original>R</original>
    <variation>K</variation>
    <location>
        <position position="40"/>
    </location>
</feature>
<feature type="sequence conflict" description="In Ref. 5; AAM65872." evidence="5" ref="5">
    <original>ME</original>
    <variation>LD</variation>
    <location>
        <begin position="69"/>
        <end position="70"/>
    </location>
</feature>
<feature type="sequence conflict" description="In Ref. 5; AAM65872." evidence="5" ref="5">
    <original>S</original>
    <variation>A</variation>
    <location>
        <position position="89"/>
    </location>
</feature>